<organism>
    <name type="scientific">Gibberella zeae (strain ATCC MYA-4620 / CBS 123657 / FGSC 9075 / NRRL 31084 / PH-1)</name>
    <name type="common">Wheat head blight fungus</name>
    <name type="synonym">Fusarium graminearum</name>
    <dbReference type="NCBI Taxonomy" id="229533"/>
    <lineage>
        <taxon>Eukaryota</taxon>
        <taxon>Fungi</taxon>
        <taxon>Dikarya</taxon>
        <taxon>Ascomycota</taxon>
        <taxon>Pezizomycotina</taxon>
        <taxon>Sordariomycetes</taxon>
        <taxon>Hypocreomycetidae</taxon>
        <taxon>Hypocreales</taxon>
        <taxon>Nectriaceae</taxon>
        <taxon>Fusarium</taxon>
    </lineage>
</organism>
<dbReference type="EMBL" id="HG970332">
    <property type="protein sequence ID" value="CEF71867.1"/>
    <property type="molecule type" value="Genomic_DNA"/>
</dbReference>
<dbReference type="RefSeq" id="XP_011315626.1">
    <property type="nucleotide sequence ID" value="XM_011317324.1"/>
</dbReference>
<dbReference type="GeneID" id="23547557"/>
<dbReference type="KEGG" id="fgr:FGSG_00039"/>
<dbReference type="VEuPathDB" id="FungiDB:FGRAMPH1_01G00135"/>
<dbReference type="eggNOG" id="ENOG502SEJU">
    <property type="taxonomic scope" value="Eukaryota"/>
</dbReference>
<dbReference type="HOGENOM" id="CLU_059589_0_0_1"/>
<dbReference type="InParanoid" id="I1R9A8"/>
<dbReference type="OrthoDB" id="86203at110618"/>
<dbReference type="Proteomes" id="UP000070720">
    <property type="component" value="Chromosome 1"/>
</dbReference>
<evidence type="ECO:0000269" key="1">
    <source>
    </source>
</evidence>
<evidence type="ECO:0000303" key="2">
    <source>
    </source>
</evidence>
<evidence type="ECO:0000305" key="3">
    <source>
    </source>
</evidence>
<protein>
    <recommendedName>
        <fullName evidence="2">Gramillins biosynthetic cluster protein FGSG_00039</fullName>
    </recommendedName>
</protein>
<sequence>MHLDHKLPWKTIASHFTLARDGSSPNYNLIALGLSTQDAALGHFSRIFIATIEEFSNTETSKINLNQVDGKLFSDDVLNFPEHHFGLGPHDTNSALNNPLDAKHQELKYWKGRASTASEYGTSPEYSASYSTADGDLADAAKMLVITAAVSDNQAIRREALSALCQLSAHVPMSDLRGLSWGHGFGLSLVASEALKLYMLLNLIEAVQSRGAQQVSLLRVKILLCALGNYSLQNYDFPAQNIPHRAFWHSLGITESWADRQADGVRESDEPVVDPLGLGDDEIHQEARINLKKYLKDCFAILYVYDVFLKQIASEEERKEFWSYEINRVILYL</sequence>
<keyword id="KW-1185">Reference proteome</keyword>
<keyword id="KW-0843">Virulence</keyword>
<proteinExistence type="predicted"/>
<reference key="1">
    <citation type="journal article" date="2007" name="Science">
        <title>The Fusarium graminearum genome reveals a link between localized polymorphism and pathogen specialization.</title>
        <authorList>
            <person name="Cuomo C.A."/>
            <person name="Gueldener U."/>
            <person name="Xu J.-R."/>
            <person name="Trail F."/>
            <person name="Turgeon B.G."/>
            <person name="Di Pietro A."/>
            <person name="Walton J.D."/>
            <person name="Ma L.-J."/>
            <person name="Baker S.E."/>
            <person name="Rep M."/>
            <person name="Adam G."/>
            <person name="Antoniw J."/>
            <person name="Baldwin T."/>
            <person name="Calvo S.E."/>
            <person name="Chang Y.-L."/>
            <person name="DeCaprio D."/>
            <person name="Gale L.R."/>
            <person name="Gnerre S."/>
            <person name="Goswami R.S."/>
            <person name="Hammond-Kosack K."/>
            <person name="Harris L.J."/>
            <person name="Hilburn K."/>
            <person name="Kennell J.C."/>
            <person name="Kroken S."/>
            <person name="Magnuson J.K."/>
            <person name="Mannhaupt G."/>
            <person name="Mauceli E.W."/>
            <person name="Mewes H.-W."/>
            <person name="Mitterbauer R."/>
            <person name="Muehlbauer G."/>
            <person name="Muensterkoetter M."/>
            <person name="Nelson D."/>
            <person name="O'Donnell K."/>
            <person name="Ouellet T."/>
            <person name="Qi W."/>
            <person name="Quesneville H."/>
            <person name="Roncero M.I.G."/>
            <person name="Seong K.-Y."/>
            <person name="Tetko I.V."/>
            <person name="Urban M."/>
            <person name="Waalwijk C."/>
            <person name="Ward T.J."/>
            <person name="Yao J."/>
            <person name="Birren B.W."/>
            <person name="Kistler H.C."/>
        </authorList>
    </citation>
    <scope>NUCLEOTIDE SEQUENCE [LARGE SCALE GENOMIC DNA]</scope>
    <source>
        <strain>ATCC MYA-4620 / CBS 123657 / FGSC 9075 / NRRL 31084 / PH-1</strain>
    </source>
</reference>
<reference key="2">
    <citation type="journal article" date="2010" name="Nature">
        <title>Comparative genomics reveals mobile pathogenicity chromosomes in Fusarium.</title>
        <authorList>
            <person name="Ma L.-J."/>
            <person name="van der Does H.C."/>
            <person name="Borkovich K.A."/>
            <person name="Coleman J.J."/>
            <person name="Daboussi M.-J."/>
            <person name="Di Pietro A."/>
            <person name="Dufresne M."/>
            <person name="Freitag M."/>
            <person name="Grabherr M."/>
            <person name="Henrissat B."/>
            <person name="Houterman P.M."/>
            <person name="Kang S."/>
            <person name="Shim W.-B."/>
            <person name="Woloshuk C."/>
            <person name="Xie X."/>
            <person name="Xu J.-R."/>
            <person name="Antoniw J."/>
            <person name="Baker S.E."/>
            <person name="Bluhm B.H."/>
            <person name="Breakspear A."/>
            <person name="Brown D.W."/>
            <person name="Butchko R.A.E."/>
            <person name="Chapman S."/>
            <person name="Coulson R."/>
            <person name="Coutinho P.M."/>
            <person name="Danchin E.G.J."/>
            <person name="Diener A."/>
            <person name="Gale L.R."/>
            <person name="Gardiner D.M."/>
            <person name="Goff S."/>
            <person name="Hammond-Kosack K.E."/>
            <person name="Hilburn K."/>
            <person name="Hua-Van A."/>
            <person name="Jonkers W."/>
            <person name="Kazan K."/>
            <person name="Kodira C.D."/>
            <person name="Koehrsen M."/>
            <person name="Kumar L."/>
            <person name="Lee Y.-H."/>
            <person name="Li L."/>
            <person name="Manners J.M."/>
            <person name="Miranda-Saavedra D."/>
            <person name="Mukherjee M."/>
            <person name="Park G."/>
            <person name="Park J."/>
            <person name="Park S.-Y."/>
            <person name="Proctor R.H."/>
            <person name="Regev A."/>
            <person name="Ruiz-Roldan M.C."/>
            <person name="Sain D."/>
            <person name="Sakthikumar S."/>
            <person name="Sykes S."/>
            <person name="Schwartz D.C."/>
            <person name="Turgeon B.G."/>
            <person name="Wapinski I."/>
            <person name="Yoder O."/>
            <person name="Young S."/>
            <person name="Zeng Q."/>
            <person name="Zhou S."/>
            <person name="Galagan J."/>
            <person name="Cuomo C.A."/>
            <person name="Kistler H.C."/>
            <person name="Rep M."/>
        </authorList>
    </citation>
    <scope>GENOME REANNOTATION</scope>
    <source>
        <strain>ATCC MYA-4620 / CBS 123657 / FGSC 9075 / NRRL 31084 / PH-1</strain>
    </source>
</reference>
<reference key="3">
    <citation type="journal article" date="2015" name="BMC Genomics">
        <title>The completed genome sequence of the pathogenic ascomycete fungus Fusarium graminearum.</title>
        <authorList>
            <person name="King R."/>
            <person name="Urban M."/>
            <person name="Hammond-Kosack M.C.U."/>
            <person name="Hassani-Pak K."/>
            <person name="Hammond-Kosack K.E."/>
        </authorList>
    </citation>
    <scope>NUCLEOTIDE SEQUENCE [LARGE SCALE GENOMIC DNA]</scope>
    <source>
        <strain>ATCC MYA-4620 / CBS 123657 / FGSC 9075 / NRRL 31084 / PH-1</strain>
    </source>
</reference>
<reference key="4">
    <citation type="journal article" date="2018" name="J. Am. Chem. Soc.">
        <title>Gramillin A and B: cyclic lipopeptides identified as the nonribosomal biosynthetic products of Fusarium graminearum.</title>
        <authorList>
            <person name="Bahadoor A."/>
            <person name="Brauer E.K."/>
            <person name="Bosnich W."/>
            <person name="Schneiderman D."/>
            <person name="Johnston A."/>
            <person name="Aubin Y."/>
            <person name="Blackwell B."/>
            <person name="Melanson J.E."/>
            <person name="Harris L.J."/>
        </authorList>
    </citation>
    <scope>FUNCTION</scope>
    <scope>PATHWAY</scope>
</reference>
<gene>
    <name type="ORF">FG00039</name>
    <name type="ORF">FGRAMPH1_01T00135</name>
    <name type="ORF">FGSG_00039</name>
</gene>
<comment type="function">
    <text evidence="1 3">Part of the gene cluster that mediates the biosynthesis of gramillins A and B, bicyclic lipopeptides that induce cell death in maize leaves but not in wheat leaves (PubMed:30395461). The nonribosomal peptide synthetase GRA1 incorporates respectively a glutamic adic (Glu), a leucine (Leu), a serine (Ser), a hydroxyglutamine (HOGln), a 2-amino decanoic acid, and 2 cysteins (CysB and CysA) (Probable). The biosynthesis of 2-amino decanoic acid incorporated in gramillins could be initiated by a fatty acid synthase composed of the alpha and beta subunits FGSG_00036 and FGSG_11656 (Probable). The cytochrome P450 monooxygenase FGSG_15680 could hydroxylate the fatty acid chain (Probable). Subsequent oxidation to the ketone by the oxidoreductase FGSG_00048 and transamination by aminotransferase FGSG_00049 could form 2-amino-decanoic acid (Probable). On the other hand, FGSG_15680 could also be responsible for the HO-modified glutamine at the gamma-position (Probable). Whether hydroxylation occurs on the fully assembled product or on the Gln residue prior to assembly into the gramillins requires further proof (Probable). The thioredoxin FGSG_00043 could also be required for the disulfide-bond formation between CysA and CysB (Probable). The specific involvement of the remaining proteins from the cluster is more difficult to discern, but could have broader regulatory (FGSG_00040 and FGSG_11657) or enzymatic functions (FGSG_00044 and FGSG_00045) (Probable). The final C-domain of GRA1 does not possess the expected sequence of a termination CT domain, often implicated in macrocyclization and release of a cyclopeptidein fungal NRPs; and the thioesterase FGSG_00047 may act in concert with the terminal C-domain of GRA1 to catalyze the formation of the macrocyclic anhydride and release of the products (Probable).</text>
</comment>
<comment type="pathway">
    <text evidence="3">Mycotoxin biosynthesis.</text>
</comment>
<accession>I1R9A8</accession>
<accession>A0A098D0A1</accession>
<name>GRA5_GIBZE</name>
<feature type="chain" id="PRO_0000450570" description="Gramillins biosynthetic cluster protein FGSG_00039">
    <location>
        <begin position="1"/>
        <end position="333"/>
    </location>
</feature>